<sequence length="2227" mass="251399">MNMSKQGIFQTVGSGLDHILSLADIEEEQMIQSVDRTAVTGASYFTSVDQSSVHTAEVGSHQIEPLKTSVDKPGSKKTQGEKFFLIHSADWLTTHALFHEVAKLDVVKLLYNEQFAVQGLLRYHTYARFGIEIQVQINPTPFQQGGLICAMVPGDQSYGSIASLTVYPHGLLNCNINNVVRIKVPFIYTRGAYHFKDPQYPVWELTIRVWSELNIGTGTSAYTSLNVLARFTDLELHGLTPLSTQMMRNEFRVSTTENVVNLSNYEDARAKMSFALDPEDWKSDPSQGGGIKITHFTTWTSIPTLAAQFPFNASDSVGQQIKVIPVDPYFFQMTNTNPDQKCITALASICQMFCFWRGDLVFDFQVFPTKYHSGRLLFCFVPGNELIDVTGITLKQATTAPCAVMDITGVQSTLRFRVPWISDTPYRVNRYTKSAHQKGEYTAIGKLIVYCYNRLTSPSNVASHVRVNVYLSAINLECFAPLYHAMDVTTQVGDDSGGFSTTVSTEQNVPDPQVGITTMRDLKGKANRGKMDVSGVQAPVGAITTIEDPVLAKKVPETFPELKPGESRHTSDHMSIYKFMGRSHFLCTFTFNSNNKEYTFPITLSSTSNPPHGLPSTLRWFFNLFQLYRGPLDLTIIITGATDVDGMAWFTPVGLAVDTPWVEKESALSIDYKTALGAVRFNTRRTGNIQIRLPWYSYLYAVSGALDGLGDKTDSTFGLVSIQIANYNHSDEYLSFSCYLSVTEQSEFYFPRAPLNSNAMLSTESMMSRIAAGDLESSVDDPRSEEDRRFESHIECRKPYKELRLEVGKQRLKYAQEELSNEVLPPPRKMKGLFSQAKISLFYTEEHEIMKFSWRGVTADTRALRRFGFSMAAGRSVWTLEMDAGVLTGRLVRLNDEKWTEMKDDKIVSLIEKFTSNKYWSKVSFPHGMLDLEEIAANSTDFPNMSETDLCFLLHWLNPKKINLADRMLGLSGVQEIKEQGVGLIAECRTFLDSIAGTLKSMMFGFHHSVTVEIINTVLCFVKSGILLYVIQQLNQDEHSHIIGLLRVMNYADIGCSVISCGKVFSKMLETVFNWQMDSRMMELRTQSFSNWLRDICSGITIFKSFKDAIYWLYTKLKDFYEVNYGKKKDILNILKDNQQKIEKAIEEADNFCILQIQDVEKFDQYQKGVDLIQKLRTVHSMAQVDPNLGVHLSPLRDCIARVHQKLKNLGSINQAMVTRCEPVVCYLYGKRGGGKSLTSIALATKICKHYGVEPEKNIYTKPVASDYWDGYSGQLVCIIDDIGQNTTDEDWSDFCQLVSGCPMRLNMASLEEKGRHFSSPFIIATSNWSNPSPKTVYVKEAIDRRLHFKVEVKPASFFKNPHNDMLNVNLAKTNDAIKDMSCVDLIMDGHNISLMDLLSSLVMTVEIRKQNMSEFMELWSQGISDDDNDSAVAEFFQSFPSGEPSNSKLSSFFQSVTNHKWVAVGAAVGILGVLVGGWFVYKHFSRKEEEPIPAEGVYHGVTKPKQVIKLDADPVESQSTLEIAGLVRKNLVQFGVGEKNGCVRWVMNALGVKDDWLLVPSHAYKFEKDYEMMEFYFNRGGTYYSISAGNVVIQSLDVGFQDVVLMKVPTIPKFRDITQHFIKKGDVPRALNRLATLVTTVNGTPMLISEGPLKMEEKATYVHKKNDGTTVDLTVDQAWRGKGEGLPGMCGGALVSSNQSIQNAILGIHVAGGNSILVAKLVTQEMFQNIDKKIESQRIMKVEFTQCSMNVVSKTLFRKSPIHHHIDKTMINFPAVMPFSKAEVDPMAVMLSKYSLPIVEEPEDYKEASIFYQNKIVGKTQLVDDFLDLDMAITGAPGIDAINMDSSPGFPYVQEKLTKRDLIWLDENGLLLGVHPRLAQRILFNTVMMENCSDLDVVFTTCPKDELRPLEKVLESKTRAIDACPLDYTILCRMYWGPAISYFHLNPGFHTGVAIGIDPDRQWDELFKTMIRFGDVGLDLDFSAFDASLSPFMIREAGRIMSELSGTPSHFGTALINTIIYSKHLLYNCCYHVCGSMPSGSPCTALLNSIINNINLYYVFSKIFGKSPVFFCQALRILCYGDDVLIVFSRDVQIDNLDLIGQKIVDEFKKLGMTATSADKNVPQLKPVSELTFLKRSFNLVEDRIRPAISEKTIWSLIAWQRSNAEFEQNLENAQWFAFMHGYEFYQKFYYFVQSCLEKEMIEYRLKSYDWWRMRFYDQCFICDLS</sequence>
<proteinExistence type="inferred from homology"/>
<accession>A3FMB2</accession>
<accession>A3FMB3</accession>
<accession>A3FMB4</accession>
<accession>A3FMB5</accession>
<accession>A3FMB6</accession>
<protein>
    <recommendedName>
        <fullName>Genome polyprotein</fullName>
    </recommendedName>
    <component>
        <recommendedName>
            <fullName>Capsid protein VP0</fullName>
        </recommendedName>
        <alternativeName>
            <fullName>VP4-VP2</fullName>
        </alternativeName>
    </component>
    <component>
        <recommendedName>
            <fullName>Capsid protein VP4</fullName>
        </recommendedName>
        <alternativeName>
            <fullName>P1A</fullName>
        </alternativeName>
        <alternativeName>
            <fullName>Virion protein 4</fullName>
        </alternativeName>
    </component>
    <component>
        <recommendedName>
            <fullName>Capsid protein VP2</fullName>
        </recommendedName>
        <alternativeName>
            <fullName>P1B</fullName>
        </alternativeName>
        <alternativeName>
            <fullName>Virion protein 2</fullName>
        </alternativeName>
    </component>
    <component>
        <recommendedName>
            <fullName>Capsid protein VP3</fullName>
        </recommendedName>
        <alternativeName>
            <fullName>P1C</fullName>
        </alternativeName>
        <alternativeName>
            <fullName>Virion protein 3</fullName>
        </alternativeName>
    </component>
    <component>
        <recommendedName>
            <fullName>Protein VP1-2A</fullName>
        </recommendedName>
        <alternativeName>
            <fullName>VPX</fullName>
        </alternativeName>
    </component>
    <component>
        <recommendedName>
            <fullName>Capsid protein VP1</fullName>
        </recommendedName>
        <alternativeName>
            <fullName>P1D</fullName>
        </alternativeName>
        <alternativeName>
            <fullName>Virion protein 1</fullName>
        </alternativeName>
    </component>
    <component>
        <recommendedName>
            <fullName>Assembly signal 2A</fullName>
        </recommendedName>
        <alternativeName>
            <fullName evidence="4">pX</fullName>
        </alternativeName>
    </component>
    <component>
        <recommendedName>
            <fullName>Protein 2BC</fullName>
        </recommendedName>
    </component>
    <component>
        <recommendedName>
            <fullName>Protein 2B</fullName>
            <shortName>P2B</shortName>
        </recommendedName>
    </component>
    <component>
        <recommendedName>
            <fullName>Protein 2C</fullName>
            <shortName>P2C</shortName>
            <ecNumber>3.6.1.15</ecNumber>
        </recommendedName>
    </component>
    <component>
        <recommendedName>
            <fullName>Protein 3ABCD</fullName>
            <shortName>P3</shortName>
        </recommendedName>
    </component>
    <component>
        <recommendedName>
            <fullName>Protein 3ABC</fullName>
        </recommendedName>
    </component>
    <component>
        <recommendedName>
            <fullName>Protein 3AB</fullName>
        </recommendedName>
    </component>
    <component>
        <recommendedName>
            <fullName>Protein 3A</fullName>
            <shortName>P3A</shortName>
        </recommendedName>
    </component>
    <component>
        <recommendedName>
            <fullName>Viral protein genome-linked</fullName>
            <shortName>VPg</shortName>
        </recommendedName>
        <alternativeName>
            <fullName>Protein 3B</fullName>
            <shortName>P3B</shortName>
        </alternativeName>
    </component>
    <component>
        <recommendedName>
            <fullName>Protein 3CD</fullName>
        </recommendedName>
    </component>
    <component>
        <recommendedName>
            <fullName>Protease 3C</fullName>
            <shortName>P3C</shortName>
            <ecNumber evidence="4">3.4.22.28</ecNumber>
        </recommendedName>
        <alternativeName>
            <fullName>Picornain 3C</fullName>
        </alternativeName>
    </component>
    <component>
        <recommendedName>
            <fullName>RNA-directed RNA polymerase 3D-POL</fullName>
            <shortName>P3D-POL</shortName>
            <ecNumber evidence="4">2.7.7.48</ecNumber>
        </recommendedName>
    </component>
</protein>
<feature type="chain" id="PRO_0000310655" description="Genome polyprotein">
    <location>
        <begin position="1"/>
        <end position="2227"/>
    </location>
</feature>
<feature type="chain" id="PRO_0000310656" description="Capsid protein VP0">
    <location>
        <begin position="1"/>
        <end position="245"/>
    </location>
</feature>
<feature type="chain" id="PRO_0000310657" description="Capsid protein VP4">
    <location>
        <begin position="1"/>
        <end position="23"/>
    </location>
</feature>
<feature type="chain" id="PRO_0000310658" description="Capsid protein VP2">
    <location>
        <begin position="24"/>
        <end position="245"/>
    </location>
</feature>
<feature type="chain" id="PRO_0000310659" description="Capsid protein VP3">
    <location>
        <begin position="246"/>
        <end position="491"/>
    </location>
</feature>
<feature type="chain" id="PRO_0000310660" description="Protein VP1-2A">
    <location>
        <begin position="492"/>
        <end position="836"/>
    </location>
</feature>
<feature type="chain" id="PRO_0000310661" description="Capsid protein VP1">
    <location>
        <begin position="492"/>
        <end position="765"/>
    </location>
</feature>
<feature type="chain" id="PRO_0000310662" description="Assembly signal 2A">
    <location>
        <begin position="766"/>
        <end position="836"/>
    </location>
</feature>
<feature type="chain" id="PRO_0000310663" description="Protein 2BC">
    <location>
        <begin position="837"/>
        <end position="1422"/>
    </location>
</feature>
<feature type="chain" id="PRO_0000310664" description="Protein 2B">
    <location>
        <begin position="837"/>
        <end position="1087"/>
    </location>
</feature>
<feature type="chain" id="PRO_0000310665" description="Protein 2C">
    <location>
        <begin position="1088"/>
        <end position="1422"/>
    </location>
</feature>
<feature type="chain" id="PRO_0000310666" description="Protein 3ABCD">
    <location>
        <begin position="1423"/>
        <end position="2227"/>
    </location>
</feature>
<feature type="chain" id="PRO_0000310667" description="Protein 3ABC">
    <location>
        <begin position="1423"/>
        <end position="1738"/>
    </location>
</feature>
<feature type="chain" id="PRO_0000310668" description="Protein 3AB">
    <location>
        <begin position="1423"/>
        <end position="1519"/>
    </location>
</feature>
<feature type="chain" id="PRO_0000310669" description="Protein 3A">
    <location>
        <begin position="1423"/>
        <end position="1496"/>
    </location>
</feature>
<feature type="chain" id="PRO_0000310670" description="Viral protein genome-linked">
    <location>
        <begin position="1497"/>
        <end position="1519"/>
    </location>
</feature>
<feature type="chain" id="PRO_0000310671" description="Protein 3CD">
    <location>
        <begin position="1520"/>
        <end position="2227"/>
    </location>
</feature>
<feature type="chain" id="PRO_0000310672" description="Protease 3C">
    <location>
        <begin position="1520"/>
        <end position="1738"/>
    </location>
</feature>
<feature type="chain" id="PRO_0000310673" description="RNA-directed RNA polymerase 3D-POL">
    <location>
        <begin position="1739"/>
        <end position="2227"/>
    </location>
</feature>
<feature type="transmembrane region" description="Helical" evidence="5">
    <location>
        <begin position="1011"/>
        <end position="1031"/>
    </location>
</feature>
<feature type="transmembrane region" description="Helical" evidence="5">
    <location>
        <begin position="1462"/>
        <end position="1482"/>
    </location>
</feature>
<feature type="domain" description="SF3 helicase" evidence="7">
    <location>
        <begin position="1204"/>
        <end position="1366"/>
    </location>
</feature>
<feature type="domain" description="Peptidase C3" evidence="8">
    <location>
        <begin position="1514"/>
        <end position="1728"/>
    </location>
</feature>
<feature type="domain" description="RdRp catalytic" evidence="6">
    <location>
        <begin position="1976"/>
        <end position="2097"/>
    </location>
</feature>
<feature type="region of interest" description="Involved in P1-2A pentamerization" evidence="4">
    <location>
        <begin position="766"/>
        <end position="836"/>
    </location>
</feature>
<feature type="region of interest" description="Membrane-penetrating ability" evidence="4">
    <location>
        <begin position="1043"/>
        <end position="1070"/>
    </location>
</feature>
<feature type="coiled-coil region" evidence="5">
    <location>
        <begin position="1127"/>
        <end position="1152"/>
    </location>
</feature>
<feature type="short sequence motif" description="(L)YPX(n)L motif" evidence="4">
    <location>
        <begin position="167"/>
        <end position="171"/>
    </location>
</feature>
<feature type="short sequence motif" description="(L)YPX(n)L motif" evidence="4">
    <location>
        <begin position="200"/>
        <end position="205"/>
    </location>
</feature>
<feature type="active site" description="For protease 3C activity" evidence="8">
    <location>
        <position position="1563"/>
    </location>
</feature>
<feature type="active site" description="For protease 3C activity" evidence="8">
    <location>
        <position position="1603"/>
    </location>
</feature>
<feature type="active site" description="For protease 3C activity" evidence="8">
    <location>
        <position position="1691"/>
    </location>
</feature>
<feature type="binding site" evidence="7">
    <location>
        <begin position="1230"/>
        <end position="1237"/>
    </location>
    <ligand>
        <name>ATP</name>
        <dbReference type="ChEBI" id="CHEBI:30616"/>
    </ligand>
</feature>
<feature type="site" description="Cleavage" evidence="5">
    <location>
        <begin position="23"/>
        <end position="24"/>
    </location>
</feature>
<feature type="site" description="Cleavage; by protease 3C" evidence="4">
    <location>
        <begin position="245"/>
        <end position="246"/>
    </location>
</feature>
<feature type="site" description="Cleavage; by protease 3C" evidence="4">
    <location>
        <begin position="491"/>
        <end position="492"/>
    </location>
</feature>
<feature type="site" description="Cleavage; partial; by host" evidence="4">
    <location>
        <begin position="765"/>
        <end position="766"/>
    </location>
</feature>
<feature type="site" description="Important for VP1 folding and capsid assembly" evidence="4">
    <location>
        <position position="769"/>
    </location>
</feature>
<feature type="site" description="Cleavage; by protease 3C" evidence="4">
    <location>
        <begin position="836"/>
        <end position="837"/>
    </location>
</feature>
<feature type="site" description="Cleavage; by protease 3C" evidence="4">
    <location>
        <begin position="1087"/>
        <end position="1088"/>
    </location>
</feature>
<feature type="site" description="Cleavage; by protease 3C" evidence="4">
    <location>
        <begin position="1422"/>
        <end position="1423"/>
    </location>
</feature>
<feature type="site" description="Cleavage; by protease 3C" evidence="4">
    <location>
        <begin position="1496"/>
        <end position="1497"/>
    </location>
</feature>
<feature type="site" description="Cleavage; by protease 3C" evidence="4">
    <location>
        <begin position="1519"/>
        <end position="1520"/>
    </location>
</feature>
<feature type="site" description="Cleavage; by protease 3C" evidence="4">
    <location>
        <begin position="1738"/>
        <end position="1739"/>
    </location>
</feature>
<feature type="modified residue" description="O-(5'-phospho-RNA)-tyrosine" evidence="1">
    <location>
        <position position="1499"/>
    </location>
</feature>
<feature type="disulfide bond" description="Interchain" evidence="4">
    <location>
        <position position="1543"/>
    </location>
</feature>
<feature type="sequence variant" description="In strain: H2K5, H2K10, H2K15, H2K20, H2K25 and H2K30.">
    <original>K</original>
    <variation>R</variation>
    <location>
        <position position="5"/>
    </location>
</feature>
<feature type="sequence variant" description="In strain: H2K5, H2K10, H2K15, H2K20, H2K25 and H2K30.">
    <original>I</original>
    <variation>V</variation>
    <location>
        <position position="63"/>
    </location>
</feature>
<feature type="sequence variant" description="In strain: H2K5, H2K10, H2K15, H2K20, H2K25 and H2K30.">
    <original>K</original>
    <variation>R</variation>
    <location>
        <position position="67"/>
    </location>
</feature>
<feature type="sequence variant" description="In strain: H2K5, H2K10, H2K15, H2K20, H2K25 and H2K30.">
    <original>P</original>
    <variation>Q</variation>
    <location>
        <position position="278"/>
    </location>
</feature>
<feature type="sequence variant" description="In strain: H2K5, H2K10, H2K15, H2K20, H2K25 and H2K30.">
    <original>T</original>
    <variation>S</variation>
    <location>
        <position position="390"/>
    </location>
</feature>
<feature type="sequence variant" description="In strain: H2K5, H2K10, H2K15, H2K20, H2K25 and H2K30.">
    <original>R</original>
    <variation>K</variation>
    <location>
        <position position="520"/>
    </location>
</feature>
<feature type="sequence variant" description="In strain: H2K5, H2K10, H2K15, H2K20, H2K25 and H2K30.">
    <original>R</original>
    <variation>K</variation>
    <location>
        <position position="788"/>
    </location>
</feature>
<feature type="sequence variant" description="In strain: H2K5, H2K10, H2K15, H2K20, H2K25 and H2K30.">
    <original>M</original>
    <variation>L</variation>
    <location>
        <position position="871"/>
    </location>
</feature>
<feature type="sequence variant" description="In strain: H2K5, H2K10, H2K15, H2K20, H2K25 and H2K30.">
    <original>V</original>
    <variation>I</variation>
    <location>
        <position position="892"/>
    </location>
</feature>
<feature type="sequence variant" description="In strain: H2K5, H2K10, H2K15, H2K20, H2K25 and H2K30.">
    <original>S</original>
    <variation>N</variation>
    <location>
        <position position="924"/>
    </location>
</feature>
<feature type="sequence variant" description="In strain: H2K5, H2K10, H2K15, H2K20, H2K25 and H2K30.">
    <original>T</original>
    <variation>K</variation>
    <location>
        <position position="940"/>
    </location>
</feature>
<feature type="sequence variant" description="In strain: H2K10, H2K15, H2K20, H2K25 and H2K30.">
    <original>A</original>
    <variation>T</variation>
    <location>
        <position position="996"/>
    </location>
</feature>
<feature type="sequence variant" description="In strain: H2K5, H2K10, H2K15, H2K20, H2K25 and H2K30.">
    <original>T</original>
    <variation>A</variation>
    <location>
        <position position="998"/>
    </location>
</feature>
<feature type="sequence variant" description="In strain: H2K20 and H2K25.">
    <original>H</original>
    <variation>Q</variation>
    <location>
        <position position="1008"/>
    </location>
</feature>
<feature type="sequence variant" description="In strain: H2K5, H2K10, H2K15, H2K20, H2K25 and H2K30.">
    <original>A</original>
    <variation>V</variation>
    <location>
        <position position="1052"/>
    </location>
</feature>
<feature type="sequence variant" description="In strain: H2K5.">
    <original>T</original>
    <variation>S</variation>
    <location>
        <position position="1071"/>
    </location>
</feature>
<feature type="sequence variant" description="In strain: H2K5, H2K10, H2K15, H2K20, H2K25 and H2K30.">
    <original>S</original>
    <variation>N</variation>
    <location>
        <position position="1105"/>
    </location>
</feature>
<feature type="sequence variant" description="In strain: H2K5, H2K10, H2K15, H2K20, H2K25 and H2K30.">
    <original>N</original>
    <variation>K</variation>
    <location>
        <position position="1151"/>
    </location>
</feature>
<feature type="sequence variant" description="In strain: H2K15, H2K20, H2K25 and H2K30.">
    <original>F</original>
    <variation>S</variation>
    <location>
        <position position="1163"/>
    </location>
</feature>
<feature type="sequence variant" description="In strain: H2K5, H2K10, H2K15, H2K20, H2K25 and H2K30.">
    <original>D</original>
    <variation>E</variation>
    <location>
        <position position="1164"/>
    </location>
</feature>
<feature type="sequence variant" description="In strain: H2K5, H2K10, H2K15, H2K20, H2K25 and H2K30.">
    <original>G</original>
    <variation>M</variation>
    <location>
        <position position="1190"/>
    </location>
</feature>
<feature type="sequence variant" description="In strain: H2K5, H2K10, H2K15, H2K20, H2K25 and H2K30.">
    <original>E</original>
    <variation>V</variation>
    <location>
        <position position="1254"/>
    </location>
</feature>
<feature type="sequence variant" description="In strain: H2K5, H2K10, H2K15, H2K20, H2K25 and H2K30.">
    <original>K</original>
    <variation>E</variation>
    <location>
        <position position="1354"/>
    </location>
</feature>
<feature type="sequence variant" description="In strain: H2K5, H2K10, H2K15, H2K20, H2K25 and H2K30.">
    <original>N</original>
    <variation>S</variation>
    <location>
        <position position="1375"/>
    </location>
</feature>
<feature type="sequence variant" description="In strain: H2K5, H2K10, H2K15, H2K20, H2K25 and H2K30.">
    <original>I</original>
    <variation>V</variation>
    <location>
        <position position="1393"/>
    </location>
</feature>
<feature type="sequence variant" description="In strain: H2K5, H2K10, H2K15, H2K20, H2K25 and H2K30.">
    <original>S</original>
    <variation>T</variation>
    <location>
        <position position="1414"/>
    </location>
</feature>
<feature type="sequence variant" description="In strain: H2K5, H2K10, H2K15, H2K20, H2K25 and H2K30.">
    <location>
        <begin position="1428"/>
        <end position="1429"/>
    </location>
</feature>
<feature type="sequence variant" description="In strain: H2K5, H2K10, H2K15, H2K20, H2K25 and H2K30.">
    <original>S</original>
    <variation>G</variation>
    <location>
        <position position="1452"/>
    </location>
</feature>
<feature type="sequence variant" description="In strain: H2K5, H2K10, H2K15, H2K20, H2K25 and H2K30.">
    <original>T</original>
    <variation>S</variation>
    <location>
        <position position="1458"/>
    </location>
</feature>
<feature type="sequence variant" description="In strain: H2K5, H2K10, H2K15, H2K20, H2K25 and H2K30.">
    <original>S</original>
    <variation>T</variation>
    <location>
        <position position="1486"/>
    </location>
</feature>
<feature type="sequence variant" description="In strain: H2K5, H2K10, H2K15, H2K20, H2K25 and H2K30.">
    <original>A</original>
    <variation>T</variation>
    <location>
        <position position="1495"/>
    </location>
</feature>
<feature type="sequence variant" description="In strain: H2K5, H2K10, H2K15, H2K20, H2K25 and H2K30.">
    <original>T</original>
    <variation>S</variation>
    <location>
        <position position="1661"/>
    </location>
</feature>
<feature type="sequence variant" description="In strain: H2K5, H2K10, H2K15, H2K20, H2K25 and H2K30.">
    <original>E</original>
    <variation>D</variation>
    <location>
        <position position="1744"/>
    </location>
</feature>
<feature type="sequence variant" description="In strain: H2K5, H2K10, H2K15, H2K20, H2K25 and H2K30.">
    <original>V</original>
    <variation>A</variation>
    <location>
        <position position="1777"/>
    </location>
</feature>
<feature type="sequence variant" description="In strain: H2K5, H2K10, H2K15, H2K20, H2K25 and H2K30.">
    <original>V</original>
    <variation>I</variation>
    <location>
        <position position="1785"/>
    </location>
</feature>
<feature type="sequence variant" description="In strain: H2K5, H2K10, H2K15, H2K20, H2K25 and H2K30.">
    <original>V</original>
    <variation>M</variation>
    <location>
        <position position="1790"/>
    </location>
</feature>
<feature type="sequence variant" description="In strain: H2K5, H2K10, H2K15, H2K20, H2K25 and H2K30.">
    <original>K</original>
    <variation>R</variation>
    <location>
        <position position="1857"/>
    </location>
</feature>
<feature type="sequence variant" description="In strain: H2K5, H2K10, H2K15, H2K20, H2K25 and H2K30.">
    <original>V</original>
    <variation>I</variation>
    <location>
        <position position="1875"/>
    </location>
</feature>
<feature type="sequence variant" description="In strain: H2K5, H2K10, H2K15, H2K20, H2K25 and H2K30.">
    <original>R</original>
    <variation>K</variation>
    <location>
        <position position="1962"/>
    </location>
</feature>
<feature type="sequence variant" description="In strain: H2K5, H2K10, H2K15, H2K20, H2K25 and H2K30.">
    <original>C</original>
    <variation>Y</variation>
    <location>
        <position position="2035"/>
    </location>
</feature>
<feature type="sequence variant" description="In strain: H2K5, H2K10, H2K15, H2K20, H2K25 and H2K30.">
    <original>I</original>
    <variation>T</variation>
    <location>
        <position position="2052"/>
    </location>
</feature>
<feature type="sequence variant" description="In strain: H2K5, H2K10, H2K15, H2K20, H2K25 and H2K30.">
    <original>I</original>
    <variation>V</variation>
    <location>
        <position position="2055"/>
    </location>
</feature>
<feature type="sequence variant" description="In strain: H2K5, H2K10, H2K15, H2K20, H2K25 and H2K30.">
    <original>R</original>
    <variation>K</variation>
    <location>
        <position position="2077"/>
    </location>
</feature>
<name>POLG_HAVH2</name>
<organism>
    <name type="scientific">Human hepatitis A virus genotype IA (isolate H2)</name>
    <name type="common">HHAV</name>
    <name type="synonym">Human hepatitis A virus (isolate Human/China/H2/1982)</name>
    <dbReference type="NCBI Taxonomy" id="470423"/>
    <lineage>
        <taxon>Viruses</taxon>
        <taxon>Riboviria</taxon>
        <taxon>Orthornavirae</taxon>
        <taxon>Pisuviricota</taxon>
        <taxon>Pisoniviricetes</taxon>
        <taxon>Picornavirales</taxon>
        <taxon>Picornaviridae</taxon>
        <taxon>Heptrevirinae</taxon>
        <taxon>Hepatovirus</taxon>
        <taxon>Hepatovirus ahepa</taxon>
        <taxon>Hepatovirus A</taxon>
    </lineage>
</organism>
<comment type="function">
    <molecule>Capsid protein VP1</molecule>
    <text evidence="4">Capsid proteins VP1, VP2, and VP3 form a closed capsid enclosing the viral positive strand RNA genome. All these proteins contain a beta-sheet structure called beta-barrel jelly roll. Together they form an icosahedral capsid (T=3) composed of 60 copies of each VP1, VP2, and VP3, with a diameter of approximately 300 Angstroms. VP1 is situated at the 12 fivefold axes, whereas VP2 and VP3 are located at the quasi-sixfold axes. The naked capsid interacts with the host receptor HAVCR1 to provide virion attachment to and probably entry into the target cell.</text>
</comment>
<comment type="function">
    <molecule>Capsid protein VP2</molecule>
    <text evidence="4">Capsid proteins VP1, VP2, and VP3 form a closed capsid enclosing the viral positive strand RNA genome. All these proteins contain a beta-sheet structure called beta-barrel jelly roll. Together they form an icosahedral capsid (T=3) composed of 60 copies of each VP1, VP2, and VP3, with a diameter of approximately 300 Angstroms. VP1 is situated at the 12 fivefold axes, whereas VP2 and VP3 are located at the quasi-sixfold axes. The naked capsid interacts with the host receptor HAVCR1 to provide virion attachment to and probably entry into the target cell.</text>
</comment>
<comment type="function">
    <molecule>Capsid protein VP3</molecule>
    <text evidence="4">Capsid proteins VP1, VP2, and VP3 form a closed capsid enclosing the viral positive strand RNA genome. All these proteins contain a beta-sheet structure called beta-barrel jelly roll. Together they form an icosahedral capsid (T=3) composed of 60 copies of each VP1, VP2, and VP3, with a diameter of approximately 300 Angstroms. VP1 is situated at the 12 fivefold axes, whereas VP2 and VP3 are located at the quasi-sixfold axes. The naked capsid interacts with the host receptor HAVCR1 to provide virion attachment to and probably entry into the target cell.</text>
</comment>
<comment type="function">
    <molecule>Capsid protein VP0</molecule>
    <text evidence="4">VP0 precursor is a component of the immature procapsids.</text>
</comment>
<comment type="function">
    <molecule>Capsid protein VP4</molecule>
    <text evidence="4">Plays a role in the assembly of the 12 pentamers into an icosahedral structure. Has not been detected in mature virions, supposedly owing to its small size.</text>
</comment>
<comment type="function">
    <molecule>Protein VP1-2A</molecule>
    <text evidence="4">Precursor component of immature procapsids that corresponds to an extended form of the structural protein VP1. After maturation, possibly by the host Cathepsin L, the assembly signal 2A is cleaved to give rise to the mature VP1 protein.</text>
</comment>
<comment type="function">
    <molecule>Protein 2B</molecule>
    <text evidence="4">Functions as a viroporin. Affects membrane integrity and causes an increase in membrane permeability. Involved in host intracellular membrane rearrangements probably to give rise to the viral factories. Does not disrupt calcium homeostasis or glycoprotein trafficking. Antagonizes the innate immune response of the host by suppressing IFN-beta synthesis, which it achieves by interfering with the RIG-I/IFIH1 pathway.</text>
</comment>
<comment type="function">
    <molecule>Protein 2BC</molecule>
    <text evidence="4">Affects membrane integrity and causes an increase in membrane permeability.</text>
</comment>
<comment type="function">
    <molecule>Protein 2C</molecule>
    <text evidence="4">Associates with and induces structural rearrangements of intracellular membranes. Displays RNA-binding activity.</text>
</comment>
<comment type="function">
    <molecule>Protein 3ABC</molecule>
    <text evidence="4">The precursor 3ABC is targeted to the mitochondrial membrane where protease 3C activity cleaves and inhibits the host antiviral protein MAVS, thereby disrupting activation of IRF3 through the IFIH1/MDA5 pathway. In vivo, the protease activity of 3ABC precursor is more efficient in cleaving the 2BC precursor than that of protein 3C. The 3ABC precursor may therefore play a role in the proteolytic processing of the polyprotein. Possible viroporin.</text>
</comment>
<comment type="function">
    <molecule>Protein 3AB</molecule>
    <text evidence="4">Interacts with the 3CD precursor and with RNA structures found at both the 5'- and 3'-termini of the viral genome. Since the 3AB precursor contains the hydrophobic domain 3A, it probably anchors the whole viral replicase complex to intracellular membranes on which viral RNA synthesis occurs.</text>
</comment>
<comment type="function">
    <molecule>Protein 3A</molecule>
    <text evidence="4">May serve as membrane anchor to the 3AB and 3ABC precursors via its hydrophobic domain. May interact with RNA.</text>
</comment>
<comment type="function">
    <molecule>Viral protein genome-linked</molecule>
    <text evidence="2 4">Acts as a primer for viral RNA replication and remains covalently bound to viral genomic RNA. VPg is uridylylated prior to priming replication into VPg-pUpU. The VPg-pUpU is then used as primer on the genomic RNA poly(A) by the RNA-dependent RNA polymerase to replicate the viral genome.</text>
</comment>
<comment type="function">
    <molecule>Protease 3C</molecule>
    <text evidence="4">Cysteine protease that generates mature viral proteins from the precursor polyprotein. In addition to its proteolytic activity, it binds to viral RNA, and thus influences viral genome replication. RNA and substrate bind cooperatively to the protease. Cleaves IKBKG/NEMO to impair innate immune signaling. Cleaves host PABPC1 which may participate in the switch of viral translation to RNA synthesis.</text>
</comment>
<comment type="function">
    <molecule>Protein 3CD</molecule>
    <text evidence="4">Interacts with the 3AB precursor and with RNA structures found at both the 5'- and 3'-termini of the viral genome. Disrupts TLR3 signaling by degrading the host adapter protein TICAM1/TRIF.</text>
</comment>
<comment type="function">
    <text evidence="4">RNA-directed RNA polymerase 3D-POL replicates genomic and antigenomic RNA by recognizing replications specific signals.</text>
</comment>
<comment type="catalytic activity">
    <reaction evidence="4 6">
        <text>RNA(n) + a ribonucleoside 5'-triphosphate = RNA(n+1) + diphosphate</text>
        <dbReference type="Rhea" id="RHEA:21248"/>
        <dbReference type="Rhea" id="RHEA-COMP:14527"/>
        <dbReference type="Rhea" id="RHEA-COMP:17342"/>
        <dbReference type="ChEBI" id="CHEBI:33019"/>
        <dbReference type="ChEBI" id="CHEBI:61557"/>
        <dbReference type="ChEBI" id="CHEBI:140395"/>
        <dbReference type="EC" id="2.7.7.48"/>
    </reaction>
</comment>
<comment type="catalytic activity">
    <reaction evidence="4">
        <text>a ribonucleoside 5'-triphosphate + H2O = a ribonucleoside 5'-diphosphate + phosphate + H(+)</text>
        <dbReference type="Rhea" id="RHEA:23680"/>
        <dbReference type="ChEBI" id="CHEBI:15377"/>
        <dbReference type="ChEBI" id="CHEBI:15378"/>
        <dbReference type="ChEBI" id="CHEBI:43474"/>
        <dbReference type="ChEBI" id="CHEBI:57930"/>
        <dbReference type="ChEBI" id="CHEBI:61557"/>
        <dbReference type="EC" id="3.6.1.15"/>
    </reaction>
</comment>
<comment type="catalytic activity">
    <reaction evidence="8">
        <text>Selective cleavage of Gln-|-Gly bond in the poliovirus polyprotein. In other picornavirus reactions Glu may be substituted for Gln, and Ser or Thr for Gly.</text>
        <dbReference type="EC" id="3.4.22.28"/>
    </reaction>
</comment>
<comment type="subunit">
    <molecule>Protein 2B</molecule>
    <text evidence="4">Homodimer. Homomultimer; probably interacts with membranes in a multimeric form. Seems to assemble into amyloid-like fibers.</text>
</comment>
<comment type="subunit">
    <molecule>Protein 3AB</molecule>
    <text evidence="4">Homodimer. Monomer. Interacts with protein 3CD.</text>
</comment>
<comment type="subunit">
    <molecule>Protein 3A</molecule>
    <text evidence="4">Interacts with host ACBD3 (By similarity).</text>
</comment>
<comment type="subunit">
    <molecule>Protein 3CD</molecule>
    <text evidence="4">Interacts with protein 3AB.</text>
</comment>
<comment type="subunit">
    <molecule>Protein 3ABC</molecule>
    <text evidence="4">Interacts with human MAVS.</text>
</comment>
<comment type="subunit">
    <molecule>Protease 3C</molecule>
    <text evidence="4">Homodimer; disulfide-linked.</text>
</comment>
<comment type="subunit">
    <molecule>Protein VP1-2A</molecule>
    <text evidence="4">Homopentamer. Homooligomer.</text>
</comment>
<comment type="subunit">
    <molecule>Capsid protein VP1</molecule>
    <text evidence="4">Interacts with capsid protein VP2. Interacts with capsid protein VP3.</text>
</comment>
<comment type="subunit">
    <molecule>Capsid protein VP2</molecule>
    <text evidence="4">Interacts with capsid protein VP1. Interacts with capsid protein VP3.</text>
</comment>
<comment type="subunit">
    <molecule>Capsid protein VP3</molecule>
    <text evidence="4">Interacts with capsid protein VP1. Interacts with capsid protein VP2.</text>
</comment>
<comment type="subcellular location">
    <molecule>Capsid protein VP2</molecule>
    <subcellularLocation>
        <location evidence="4">Virion</location>
    </subcellularLocation>
    <subcellularLocation>
        <location evidence="4">Host endosome</location>
        <location evidence="4">Host multivesicular body</location>
    </subcellularLocation>
    <text evidence="4">The egress of newly formed virions occurs through an exosome-like mechanism involving endosomal budding of viral capsids into multivesicular bodies.</text>
</comment>
<comment type="subcellular location">
    <molecule>Capsid protein VP3</molecule>
    <subcellularLocation>
        <location evidence="4">Virion</location>
    </subcellularLocation>
    <subcellularLocation>
        <location evidence="4">Host endosome</location>
        <location evidence="4">Host multivesicular body</location>
    </subcellularLocation>
    <text evidence="4">The egress of newly formed virions occurs through an exosome-like mechanism involving endosomal budding of viral capsids into multivesicular bodies.</text>
</comment>
<comment type="subcellular location">
    <molecule>Capsid protein VP1</molecule>
    <subcellularLocation>
        <location evidence="4">Virion</location>
    </subcellularLocation>
    <subcellularLocation>
        <location evidence="4">Host endosome</location>
        <location evidence="4">Host multivesicular body</location>
    </subcellularLocation>
    <text evidence="4">The egress of newly formed virions occurs through an exosome-like mechanism involving endosomal budding of viral capsids into multivesicular bodies.</text>
</comment>
<comment type="subcellular location">
    <molecule>Capsid protein VP4</molecule>
    <subcellularLocation>
        <location evidence="4">Virion</location>
    </subcellularLocation>
    <text evidence="4">Present in the full mature virion. The egress of newly formed virions occurs through an exosome-like mechanism involving endosomal budding of viral capsids into multivesicular bodies.</text>
</comment>
<comment type="subcellular location">
    <molecule>Protein 2B</molecule>
    <subcellularLocation>
        <location evidence="4">Host membrane</location>
        <topology evidence="4">Peripheral membrane protein</topology>
    </subcellularLocation>
    <text evidence="4">Probably localizes to intracellular membrane vesicles that are induced after virus infection as the site for viral RNA replication.</text>
</comment>
<comment type="subcellular location">
    <molecule>Protein 2C</molecule>
    <subcellularLocation>
        <location evidence="4">Host membrane</location>
        <topology evidence="4">Single-pass membrane protein</topology>
    </subcellularLocation>
    <text evidence="4">Probably localizes to intracellular membrane vesicles that are induced after virus infection as the site for viral RNA replication. May associate with membranes through a N-terminal amphipathic helix.</text>
</comment>
<comment type="subcellular location">
    <molecule>Protein 3ABC</molecule>
    <subcellularLocation>
        <location evidence="4">Host membrane</location>
        <topology evidence="5">Single-pass membrane protein</topology>
    </subcellularLocation>
    <subcellularLocation>
        <location evidence="4">Host mitochondrion outer membrane</location>
        <topology evidence="4">Single-pass membrane protein</topology>
    </subcellularLocation>
    <text evidence="4">Probably localizes to intracellular membrane vesicles that are induced after virus infection as the site for viral RNA replication.</text>
</comment>
<comment type="subcellular location">
    <molecule>Protein 3AB</molecule>
    <subcellularLocation>
        <location evidence="4">Host membrane</location>
        <topology evidence="5">Single-pass membrane protein</topology>
    </subcellularLocation>
    <text evidence="4">Probably localizes to intracellular membrane vesicles that are induced after virus infection as the site for viral RNA replication.</text>
</comment>
<comment type="subcellular location">
    <molecule>Protein 3A</molecule>
    <subcellularLocation>
        <location evidence="4">Host membrane</location>
        <topology evidence="5">Single-pass membrane protein</topology>
    </subcellularLocation>
    <text evidence="4">Probably localizes to intracellular membrane vesicles that are induced after virus infection as the site for viral RNA replication.</text>
</comment>
<comment type="subcellular location">
    <molecule>Viral protein genome-linked</molecule>
    <subcellularLocation>
        <location evidence="4">Virion</location>
    </subcellularLocation>
</comment>
<comment type="subcellular location">
    <molecule>Protease 3C</molecule>
    <subcellularLocation>
        <location evidence="4">Host cytoplasm</location>
    </subcellularLocation>
</comment>
<comment type="subcellular location">
    <molecule>RNA-directed RNA polymerase 3D-POL</molecule>
    <subcellularLocation>
        <location evidence="4">Host cytoplasmic vesicle membrane</location>
        <topology evidence="4">Peripheral membrane protein</topology>
        <orientation evidence="4">Cytoplasmic side</orientation>
    </subcellularLocation>
    <text evidence="4">Interacts with membranes in a complex with viral protein 3AB. Probably localizes to the surface of intracellular membrane vesicles that are induced after virus infection as the site for viral RNA replication. These vesicles are derived from the endoplasmic reticulum.</text>
</comment>
<comment type="domain">
    <molecule>Protein VP1-2A</molecule>
    <text evidence="4">The assembly signal 2A region mediates pentamerization of P1-2A.</text>
</comment>
<comment type="domain">
    <molecule>Genome polyprotein</molecule>
    <text evidence="4">Late-budding domains (L domains) are short sequence motifs essential for viral particle budding. They recruit proteins of the host ESCRT machinery (Endosomal Sorting Complex Required for Transport) or ESCRT-associated proteins. The genome polyprotein contains two L domains: a tandem of (L)YPX(n)L domain which is known to bind the PDCD6IP/ALIX adaptater protein.</text>
</comment>
<comment type="domain">
    <molecule>Capsid protein VP2</molecule>
    <text evidence="4">Late-budding domains (L domains) are short sequence motifs essential for viral particle budding. They recruit proteins of the host ESCRT machinery (Endosomal Sorting Complex Required for Transport) or ESCRT-associated proteins. Capsid protein VP2 contains two L domains: a tandem of (L)YPX(n)L domain which is known to bind the Alix adaptater protein.</text>
</comment>
<comment type="domain">
    <molecule>Protein 2B</molecule>
    <text evidence="4">The C-terminus displays a membrane-penetrating ability.</text>
</comment>
<comment type="PTM">
    <molecule>Genome polyprotein</molecule>
    <text evidence="4">Specific enzymatic cleavages by viral protease in vivo yield a variety of precursors and mature proteins. Polyprotein processing intermediates are produced, such as P1-2A which is a functional precursor of the structural proteins, VP0 which is a VP4-VP2 precursor, VP1-2A precursor, 3ABC precursor which is a stable and catalytically active precursor of 3A, 3B and 3C proteins, 3AB and 3CD precursors. The assembly signal 2A is removed from VP1-2A by a host protease, possibly host Cathepsin L. This cleavage occurs over a region of 3 amino-acids probably generating VP1 proteins with heterogeneous C-termini.</text>
</comment>
<comment type="PTM">
    <molecule>Capsid protein VP0</molecule>
    <text evidence="3">During virion maturation, immature virions are rendered infectious following cleavage of VP0 into VP4 and VP2. This maturation seems to be an autocatalytic event triggered by the presence of RNA in the capsid and is followed by a conformational change of the particle.</text>
</comment>
<comment type="PTM">
    <molecule>Protein VP1-2A</molecule>
    <text evidence="4">The assembly signal 2A is removed from VP1-2A by a host protease, possibly host Cathepsin L in naked virions. This cleavage does not occur in enveloped virions. This cleavage occurs over a region of 3 amino-acids probably generating VP1 proteins with heterogeneous C-termini.</text>
</comment>
<comment type="PTM">
    <molecule>Viral protein genome-linked</molecule>
    <text evidence="2">VPg is uridylylated prior to priming replication into VPg-pUpU.</text>
</comment>
<comment type="PTM">
    <molecule>Capsid protein VP4</molecule>
    <text evidence="4">Unlike other picornaviruses, does not seem to be myristoylated.</text>
</comment>
<comment type="miscellaneous">
    <molecule>Genome polyprotein</molecule>
    <text evidence="4">The need for an intact eIF4G factor for the initiation of translation of HAV results in an inability to shut off host protein synthesis by a mechanism similar to that of other picornaviruses.</text>
</comment>
<comment type="miscellaneous">
    <molecule>Genome polyprotein</molecule>
    <text evidence="4">During infection, enveloped virions (eHAV) are released from cells. These eHAV are cloaked in host-derived membranes and resemble exosomes. The membrane of eHAV is devoid of viral proteins and thus prevents their neutralization by antibodies. eHAV budding is dependent on ESCRT-associated proteins VPS4B and PDCD6IP/ALIX. eHAV are produced and released in the serum and plasma, but not in bile and feces which only contain the naked, nonenveloped virions. It is likely that eHAV also use HAVCR1 as a functional receptor to infect cells, an evolutionary trait that may enhance HAV infectivity.</text>
</comment>
<comment type="similarity">
    <text evidence="9">Belongs to the picornaviridae polyprotein family.</text>
</comment>
<comment type="caution">
    <text evidence="4">It is uncertain whether Met-1 or Met-3 is the initiator.</text>
</comment>
<dbReference type="EC" id="3.6.1.15"/>
<dbReference type="EC" id="3.4.22.28" evidence="4"/>
<dbReference type="EC" id="2.7.7.48" evidence="4"/>
<dbReference type="EMBL" id="EF406357">
    <property type="protein sequence ID" value="ABN59383.1"/>
    <property type="molecule type" value="Genomic_RNA"/>
</dbReference>
<dbReference type="EMBL" id="EF406358">
    <property type="protein sequence ID" value="ABN59384.1"/>
    <property type="molecule type" value="Genomic_RNA"/>
</dbReference>
<dbReference type="EMBL" id="EF406359">
    <property type="protein sequence ID" value="ABN59385.1"/>
    <property type="molecule type" value="Genomic_RNA"/>
</dbReference>
<dbReference type="EMBL" id="EF406360">
    <property type="protein sequence ID" value="ABN59386.1"/>
    <property type="molecule type" value="Genomic_RNA"/>
</dbReference>
<dbReference type="EMBL" id="EF406361">
    <property type="protein sequence ID" value="ABN59387.1"/>
    <property type="molecule type" value="Genomic_RNA"/>
</dbReference>
<dbReference type="EMBL" id="EF406362">
    <property type="protein sequence ID" value="ABN59388.1"/>
    <property type="molecule type" value="Genomic_RNA"/>
</dbReference>
<dbReference type="EMBL" id="EF406363">
    <property type="protein sequence ID" value="ABN59389.1"/>
    <property type="molecule type" value="Genomic_RNA"/>
</dbReference>
<dbReference type="BMRB" id="A3FMB2"/>
<dbReference type="SMR" id="A3FMB2"/>
<dbReference type="MEROPS" id="C03.005"/>
<dbReference type="Proteomes" id="UP000007901">
    <property type="component" value="Genome"/>
</dbReference>
<dbReference type="Proteomes" id="UP000101082">
    <property type="component" value="Genome"/>
</dbReference>
<dbReference type="Proteomes" id="UP000109380">
    <property type="component" value="Genome"/>
</dbReference>
<dbReference type="Proteomes" id="UP000120248">
    <property type="component" value="Genome"/>
</dbReference>
<dbReference type="Proteomes" id="UP000132838">
    <property type="component" value="Genome"/>
</dbReference>
<dbReference type="Proteomes" id="UP000141835">
    <property type="component" value="Genome"/>
</dbReference>
<dbReference type="Proteomes" id="UP000173248">
    <property type="component" value="Genome"/>
</dbReference>
<dbReference type="GO" id="GO:0044162">
    <property type="term" value="C:host cell cytoplasmic vesicle membrane"/>
    <property type="evidence" value="ECO:0007669"/>
    <property type="project" value="UniProtKB-SubCell"/>
</dbReference>
<dbReference type="GO" id="GO:0044193">
    <property type="term" value="C:host cell mitochondrial outer membrane"/>
    <property type="evidence" value="ECO:0007669"/>
    <property type="project" value="UniProtKB-SubCell"/>
</dbReference>
<dbReference type="GO" id="GO:0072494">
    <property type="term" value="C:host multivesicular body"/>
    <property type="evidence" value="ECO:0007669"/>
    <property type="project" value="UniProtKB-SubCell"/>
</dbReference>
<dbReference type="GO" id="GO:0016020">
    <property type="term" value="C:membrane"/>
    <property type="evidence" value="ECO:0007669"/>
    <property type="project" value="UniProtKB-KW"/>
</dbReference>
<dbReference type="GO" id="GO:0039618">
    <property type="term" value="C:T=pseudo3 icosahedral viral capsid"/>
    <property type="evidence" value="ECO:0007669"/>
    <property type="project" value="UniProtKB-KW"/>
</dbReference>
<dbReference type="GO" id="GO:0005524">
    <property type="term" value="F:ATP binding"/>
    <property type="evidence" value="ECO:0007669"/>
    <property type="project" value="UniProtKB-KW"/>
</dbReference>
<dbReference type="GO" id="GO:0015267">
    <property type="term" value="F:channel activity"/>
    <property type="evidence" value="ECO:0007669"/>
    <property type="project" value="UniProtKB-KW"/>
</dbReference>
<dbReference type="GO" id="GO:0004197">
    <property type="term" value="F:cysteine-type endopeptidase activity"/>
    <property type="evidence" value="ECO:0007669"/>
    <property type="project" value="UniProtKB-EC"/>
</dbReference>
<dbReference type="GO" id="GO:0017111">
    <property type="term" value="F:ribonucleoside triphosphate phosphatase activity"/>
    <property type="evidence" value="ECO:0007669"/>
    <property type="project" value="UniProtKB-EC"/>
</dbReference>
<dbReference type="GO" id="GO:0003723">
    <property type="term" value="F:RNA binding"/>
    <property type="evidence" value="ECO:0007669"/>
    <property type="project" value="UniProtKB-KW"/>
</dbReference>
<dbReference type="GO" id="GO:0003724">
    <property type="term" value="F:RNA helicase activity"/>
    <property type="evidence" value="ECO:0007669"/>
    <property type="project" value="InterPro"/>
</dbReference>
<dbReference type="GO" id="GO:0003968">
    <property type="term" value="F:RNA-directed RNA polymerase activity"/>
    <property type="evidence" value="ECO:0007669"/>
    <property type="project" value="UniProtKB-KW"/>
</dbReference>
<dbReference type="GO" id="GO:0005198">
    <property type="term" value="F:structural molecule activity"/>
    <property type="evidence" value="ECO:0007669"/>
    <property type="project" value="InterPro"/>
</dbReference>
<dbReference type="GO" id="GO:0006351">
    <property type="term" value="P:DNA-templated transcription"/>
    <property type="evidence" value="ECO:0007669"/>
    <property type="project" value="InterPro"/>
</dbReference>
<dbReference type="GO" id="GO:0034220">
    <property type="term" value="P:monoatomic ion transmembrane transport"/>
    <property type="evidence" value="ECO:0007669"/>
    <property type="project" value="UniProtKB-KW"/>
</dbReference>
<dbReference type="GO" id="GO:0006508">
    <property type="term" value="P:proteolysis"/>
    <property type="evidence" value="ECO:0007669"/>
    <property type="project" value="UniProtKB-KW"/>
</dbReference>
<dbReference type="GO" id="GO:0046718">
    <property type="term" value="P:symbiont entry into host cell"/>
    <property type="evidence" value="ECO:0007669"/>
    <property type="project" value="UniProtKB-KW"/>
</dbReference>
<dbReference type="GO" id="GO:0039545">
    <property type="term" value="P:symbiont-mediated suppression of host cytoplasmic pattern recognition receptor signaling pathway via inhibition of MAVS activity"/>
    <property type="evidence" value="ECO:0007669"/>
    <property type="project" value="UniProtKB-KW"/>
</dbReference>
<dbReference type="GO" id="GO:0039694">
    <property type="term" value="P:viral RNA genome replication"/>
    <property type="evidence" value="ECO:0007669"/>
    <property type="project" value="InterPro"/>
</dbReference>
<dbReference type="GO" id="GO:0019062">
    <property type="term" value="P:virion attachment to host cell"/>
    <property type="evidence" value="ECO:0007669"/>
    <property type="project" value="UniProtKB-KW"/>
</dbReference>
<dbReference type="CDD" id="cd23215">
    <property type="entry name" value="Hepatovirus_RdRp"/>
    <property type="match status" value="1"/>
</dbReference>
<dbReference type="CDD" id="cd00205">
    <property type="entry name" value="rhv_like"/>
    <property type="match status" value="2"/>
</dbReference>
<dbReference type="FunFam" id="1.20.960.20:FF:000003">
    <property type="entry name" value="Genome polyprotein"/>
    <property type="match status" value="1"/>
</dbReference>
<dbReference type="FunFam" id="2.60.120.20:FF:000016">
    <property type="entry name" value="Genome polyprotein"/>
    <property type="match status" value="1"/>
</dbReference>
<dbReference type="FunFam" id="3.30.70.270:FF:000111">
    <property type="entry name" value="Genome polyprotein"/>
    <property type="match status" value="1"/>
</dbReference>
<dbReference type="Gene3D" id="1.20.960.20">
    <property type="match status" value="1"/>
</dbReference>
<dbReference type="Gene3D" id="2.60.120.20">
    <property type="match status" value="3"/>
</dbReference>
<dbReference type="Gene3D" id="3.30.70.270">
    <property type="match status" value="1"/>
</dbReference>
<dbReference type="Gene3D" id="2.40.10.10">
    <property type="entry name" value="Trypsin-like serine proteases"/>
    <property type="match status" value="2"/>
</dbReference>
<dbReference type="InterPro" id="IPR049133">
    <property type="entry name" value="2B_soluble"/>
</dbReference>
<dbReference type="InterPro" id="IPR043502">
    <property type="entry name" value="DNA/RNA_pol_sf"/>
</dbReference>
<dbReference type="InterPro" id="IPR004004">
    <property type="entry name" value="Helic/Pol/Pept_Calicivir-typ"/>
</dbReference>
<dbReference type="InterPro" id="IPR000605">
    <property type="entry name" value="Helicase_SF3_ssDNA/RNA_vir"/>
</dbReference>
<dbReference type="InterPro" id="IPR014759">
    <property type="entry name" value="Helicase_SF3_ssRNA_vir"/>
</dbReference>
<dbReference type="InterPro" id="IPR024354">
    <property type="entry name" value="Hepatitis_A_VP1-2A"/>
</dbReference>
<dbReference type="InterPro" id="IPR044067">
    <property type="entry name" value="PCV_3C_PRO"/>
</dbReference>
<dbReference type="InterPro" id="IPR000199">
    <property type="entry name" value="Peptidase_C3A/C3B_picornavir"/>
</dbReference>
<dbReference type="InterPro" id="IPR009003">
    <property type="entry name" value="Peptidase_S1_PA"/>
</dbReference>
<dbReference type="InterPro" id="IPR043504">
    <property type="entry name" value="Peptidase_S1_PA_chymotrypsin"/>
</dbReference>
<dbReference type="InterPro" id="IPR001676">
    <property type="entry name" value="Picornavirus_capsid"/>
</dbReference>
<dbReference type="InterPro" id="IPR043128">
    <property type="entry name" value="Rev_trsase/Diguanyl_cyclase"/>
</dbReference>
<dbReference type="InterPro" id="IPR033703">
    <property type="entry name" value="Rhv-like"/>
</dbReference>
<dbReference type="InterPro" id="IPR001205">
    <property type="entry name" value="RNA-dir_pol_C"/>
</dbReference>
<dbReference type="InterPro" id="IPR007094">
    <property type="entry name" value="RNA-dir_pol_PSvirus"/>
</dbReference>
<dbReference type="InterPro" id="IPR029053">
    <property type="entry name" value="Viral_coat"/>
</dbReference>
<dbReference type="Pfam" id="PF20758">
    <property type="entry name" value="2B_soluble"/>
    <property type="match status" value="1"/>
</dbReference>
<dbReference type="Pfam" id="PF12944">
    <property type="entry name" value="HAV_VP"/>
    <property type="match status" value="1"/>
</dbReference>
<dbReference type="Pfam" id="PF00548">
    <property type="entry name" value="Peptidase_C3"/>
    <property type="match status" value="1"/>
</dbReference>
<dbReference type="Pfam" id="PF00680">
    <property type="entry name" value="RdRP_1"/>
    <property type="match status" value="1"/>
</dbReference>
<dbReference type="Pfam" id="PF00073">
    <property type="entry name" value="Rhv"/>
    <property type="match status" value="2"/>
</dbReference>
<dbReference type="Pfam" id="PF00910">
    <property type="entry name" value="RNA_helicase"/>
    <property type="match status" value="1"/>
</dbReference>
<dbReference type="PRINTS" id="PR00918">
    <property type="entry name" value="CALICVIRUSNS"/>
</dbReference>
<dbReference type="SUPFAM" id="SSF56672">
    <property type="entry name" value="DNA/RNA polymerases"/>
    <property type="match status" value="1"/>
</dbReference>
<dbReference type="SUPFAM" id="SSF88633">
    <property type="entry name" value="Positive stranded ssRNA viruses"/>
    <property type="match status" value="3"/>
</dbReference>
<dbReference type="SUPFAM" id="SSF50494">
    <property type="entry name" value="Trypsin-like serine proteases"/>
    <property type="match status" value="1"/>
</dbReference>
<dbReference type="PROSITE" id="PS51874">
    <property type="entry name" value="PCV_3C_PRO"/>
    <property type="match status" value="1"/>
</dbReference>
<dbReference type="PROSITE" id="PS50507">
    <property type="entry name" value="RDRP_SSRNA_POS"/>
    <property type="match status" value="1"/>
</dbReference>
<dbReference type="PROSITE" id="PS51218">
    <property type="entry name" value="SF3_HELICASE_2"/>
    <property type="match status" value="1"/>
</dbReference>
<reference key="1">
    <citation type="journal article" date="2007" name="World J. Gastroenterol.">
        <title>Molecular evolution of hepatitis A virus in a human diploid cell line.</title>
        <authorList>
            <person name="Tang C.H."/>
            <person name="Mao J.S."/>
            <person name="Chai S.A."/>
            <person name="Chen Y."/>
            <person name="Zhuang F.C."/>
        </authorList>
    </citation>
    <scope>NUCLEOTIDE SEQUENCE [GENOMIC RNA]</scope>
    <source>
        <strain>H2/wt</strain>
        <strain>H2K10</strain>
        <strain>H2K15</strain>
        <strain>H2K20</strain>
        <strain>H2K25</strain>
        <strain>H2K30</strain>
        <strain>H2K5</strain>
    </source>
</reference>
<evidence type="ECO:0000250" key="1"/>
<evidence type="ECO:0000250" key="2">
    <source>
        <dbReference type="UniProtKB" id="P03300"/>
    </source>
</evidence>
<evidence type="ECO:0000250" key="3">
    <source>
        <dbReference type="UniProtKB" id="P03303"/>
    </source>
</evidence>
<evidence type="ECO:0000250" key="4">
    <source>
        <dbReference type="UniProtKB" id="P08617"/>
    </source>
</evidence>
<evidence type="ECO:0000255" key="5"/>
<evidence type="ECO:0000255" key="6">
    <source>
        <dbReference type="PROSITE-ProRule" id="PRU00539"/>
    </source>
</evidence>
<evidence type="ECO:0000255" key="7">
    <source>
        <dbReference type="PROSITE-ProRule" id="PRU00551"/>
    </source>
</evidence>
<evidence type="ECO:0000255" key="8">
    <source>
        <dbReference type="PROSITE-ProRule" id="PRU01222"/>
    </source>
</evidence>
<evidence type="ECO:0000305" key="9"/>
<organismHost>
    <name type="scientific">Homo sapiens</name>
    <name type="common">Human</name>
    <dbReference type="NCBI Taxonomy" id="9606"/>
</organismHost>
<keyword id="KW-0067">ATP-binding</keyword>
<keyword id="KW-0167">Capsid protein</keyword>
<keyword id="KW-0175">Coiled coil</keyword>
<keyword id="KW-0191">Covalent protein-RNA linkage</keyword>
<keyword id="KW-1015">Disulfide bond</keyword>
<keyword id="KW-0347">Helicase</keyword>
<keyword id="KW-1035">Host cytoplasm</keyword>
<keyword id="KW-1036">Host cytoplasmic vesicle</keyword>
<keyword id="KW-1039">Host endosome</keyword>
<keyword id="KW-1043">Host membrane</keyword>
<keyword id="KW-1045">Host mitochondrion</keyword>
<keyword id="KW-1047">Host mitochondrion outer membrane</keyword>
<keyword id="KW-0945">Host-virus interaction</keyword>
<keyword id="KW-0378">Hydrolase</keyword>
<keyword id="KW-1090">Inhibition of host innate immune response by virus</keyword>
<keyword id="KW-1097">Inhibition of host MAVS by virus</keyword>
<keyword id="KW-1113">Inhibition of host RLR pathway by virus</keyword>
<keyword id="KW-0922">Interferon antiviral system evasion</keyword>
<keyword id="KW-0407">Ion channel</keyword>
<keyword id="KW-0406">Ion transport</keyword>
<keyword id="KW-0472">Membrane</keyword>
<keyword id="KW-0547">Nucleotide-binding</keyword>
<keyword id="KW-0548">Nucleotidyltransferase</keyword>
<keyword id="KW-0597">Phosphoprotein</keyword>
<keyword id="KW-0645">Protease</keyword>
<keyword id="KW-0694">RNA-binding</keyword>
<keyword id="KW-0696">RNA-directed RNA polymerase</keyword>
<keyword id="KW-1143">T=pseudo3 icosahedral capsid protein</keyword>
<keyword id="KW-0788">Thiol protease</keyword>
<keyword id="KW-0808">Transferase</keyword>
<keyword id="KW-0812">Transmembrane</keyword>
<keyword id="KW-1133">Transmembrane helix</keyword>
<keyword id="KW-0813">Transport</keyword>
<keyword id="KW-1161">Viral attachment to host cell</keyword>
<keyword id="KW-0899">Viral immunoevasion</keyword>
<keyword id="KW-1182">Viral ion channel</keyword>
<keyword id="KW-0693">Viral RNA replication</keyword>
<keyword id="KW-0946">Virion</keyword>
<keyword id="KW-1160">Virus entry into host cell</keyword>